<accession>A0A067N4H9</accession>
<keyword id="KW-0134">Cell wall</keyword>
<keyword id="KW-1015">Disulfide bond</keyword>
<keyword id="KW-1185">Reference proteome</keyword>
<keyword id="KW-0964">Secreted</keyword>
<keyword id="KW-0732">Signal</keyword>
<reference key="1">
    <citation type="journal article" date="2014" name="Proc. Natl. Acad. Sci. U.S.A.">
        <title>Extensive sampling of basidiomycete genomes demonstrates inadequacy of the white-rot/brown-rot paradigm for wood decay fungi.</title>
        <authorList>
            <person name="Riley R."/>
            <person name="Salamov A.A."/>
            <person name="Brown D.W."/>
            <person name="Nagy L.G."/>
            <person name="Floudas D."/>
            <person name="Held B.W."/>
            <person name="Levasseur A."/>
            <person name="Lombard V."/>
            <person name="Morin E."/>
            <person name="Otillar R."/>
            <person name="Lindquist E.A."/>
            <person name="Sun H."/>
            <person name="LaButti K.M."/>
            <person name="Schmutz J."/>
            <person name="Jabbour D."/>
            <person name="Luo H."/>
            <person name="Baker S.E."/>
            <person name="Pisabarro A.G."/>
            <person name="Walton J.D."/>
            <person name="Blanchette R.A."/>
            <person name="Henrissat B."/>
            <person name="Martin F."/>
            <person name="Cullen D."/>
            <person name="Hibbett D.S."/>
            <person name="Grigoriev I.V."/>
        </authorList>
    </citation>
    <scope>NUCLEOTIDE SEQUENCE [LARGE SCALE GENOMIC DNA]</scope>
    <source>
        <strain>PC15</strain>
    </source>
</reference>
<reference key="2">
    <citation type="journal article" date="2002" name="Appl. Environ. Microbiol.">
        <title>Differentially regulated, vegetative-mycelium-specific hydrophobins of the edible basidiomycete Pleurotus ostreatus.</title>
        <authorList>
            <person name="Penas M.M."/>
            <person name="Rust B."/>
            <person name="Larraya L.M."/>
            <person name="Ramirez L."/>
            <person name="Pisabarro A.G."/>
        </authorList>
    </citation>
    <scope>DEVELOPMENTAL STAGE</scope>
    <scope>INDUCTION</scope>
    <scope>SUBCELLULAR LOCATION</scope>
</reference>
<reference key="3">
    <citation type="journal article" date="2010" name="Glycobiology">
        <title>The Pleurotus ostreatus hydrophobin Vmh2 and its interaction with glucans.</title>
        <authorList>
            <person name="Armenante A."/>
            <person name="Longobardi S."/>
            <person name="Rea I."/>
            <person name="De Stefano L."/>
            <person name="Giocondo M."/>
            <person name="Silipo A."/>
            <person name="Molinaro A."/>
            <person name="Giardina P."/>
        </authorList>
    </citation>
    <scope>FUNCTION</scope>
    <scope>SUBUNIT</scope>
</reference>
<reference key="4">
    <citation type="journal article" date="2012" name="Biomacromolecules">
        <title>Environmental conditions modulate the switch among different states of the hydrophobin Vmh2 from Pleurotus ostreatus.</title>
        <authorList>
            <person name="Longobardi S."/>
            <person name="Picone D."/>
            <person name="Ercole C."/>
            <person name="Spadaccini R."/>
            <person name="De Stefano L."/>
            <person name="Rea I."/>
            <person name="Giardina P."/>
        </authorList>
    </citation>
    <scope>FUNCTION</scope>
    <scope>SUBUNIT</scope>
</reference>
<reference key="5">
    <citation type="journal article" date="2012" name="J. R. Soc. Interface">
        <title>Hydrophobin Vmh2-glucose complexes self-assemble in nanometric biofilms.</title>
        <authorList>
            <person name="Rea I."/>
            <person name="Giardina P."/>
            <person name="Longobardi S."/>
            <person name="Porro F."/>
            <person name="Casuscelli V."/>
            <person name="Rendina I."/>
            <person name="De Stefano L."/>
        </authorList>
    </citation>
    <scope>SUBUNIT</scope>
</reference>
<reference key="6">
    <citation type="journal article" date="2012" name="Langmuir">
        <title>Self-assembly of hydrophobin protein rodlets studied with atomic force spectroscopy in dynamic mode.</title>
        <authorList>
            <person name="Houmadi S."/>
            <person name="Rodriguez R.D."/>
            <person name="Longobardi S."/>
            <person name="Giardina P."/>
            <person name="Faure M.C."/>
            <person name="Giocondo M."/>
            <person name="Lacaze E."/>
        </authorList>
    </citation>
    <scope>SUBUNIT</scope>
</reference>
<reference key="7">
    <citation type="journal article" date="2015" name="Colloids Surf. B Biointerfaces">
        <title>The amphiphilic hydrophobin Vmh2 plays a key role in one step synthesis of hybrid protein-gold nanoparticles.</title>
        <authorList>
            <person name="Politi J."/>
            <person name="De Stefano L."/>
            <person name="Longobardi S."/>
            <person name="Giardina P."/>
            <person name="Rea I."/>
            <person name="Methivier C."/>
            <person name="Pradier C.M."/>
            <person name="Casale S."/>
            <person name="Spadavecchia J."/>
        </authorList>
    </citation>
    <scope>BIOTECHNOLOGY</scope>
</reference>
<reference key="8">
    <citation type="journal article" date="2016" name="Biomacromolecules">
        <title>Class I Hydrophobin Vmh2 Adopts Atypical Mechanisms to Self-Assemble into Functional Amyloid Fibrils.</title>
        <authorList>
            <person name="Gravagnuolo A.M."/>
            <person name="Longobardi S."/>
            <person name="Luchini A."/>
            <person name="Appavou M.S."/>
            <person name="De Stefano L."/>
            <person name="Notomista E."/>
            <person name="Paduano L."/>
            <person name="Giardina P."/>
        </authorList>
    </citation>
    <scope>SUBUNIT</scope>
</reference>
<reference key="9">
    <citation type="journal article" date="2017" name="Biofouling">
        <title>Hydrophobin coating prevents Staphylococcus epidermidis biofilm formation on different surfaces.</title>
        <authorList>
            <person name="Artini M."/>
            <person name="Cicatiello P."/>
            <person name="Ricciardelli A."/>
            <person name="Papa R."/>
            <person name="Selan L."/>
            <person name="Dardano P."/>
            <person name="Tilotta M."/>
            <person name="Vrenna G."/>
            <person name="Tutino M.L."/>
            <person name="Giardina P."/>
            <person name="Parrilli E."/>
        </authorList>
    </citation>
    <scope>SUBUNIT</scope>
    <scope>BIOTECHNOLOGY</scope>
</reference>
<reference key="10">
    <citation type="journal article" date="2017" name="Biotechnol. Bioeng.">
        <title>Vmh2 hydrophobin as a tool for the development of 'self-immobilizing' enzymes for biosensing.</title>
        <authorList>
            <person name="Piscitelli A."/>
            <person name="Pennacchio A."/>
            <person name="Longobardi S."/>
            <person name="Velotta R."/>
            <person name="Giardina P."/>
        </authorList>
    </citation>
    <scope>BIOTECHNOLOGY</scope>
</reference>
<reference key="11">
    <citation type="journal article" date="2020" name="Int. J. Biol. Macromol.">
        <title>Development of anti-bacterial surfaces using a hydrophobin chimeric protein.</title>
        <authorList>
            <person name="Sorrentino I."/>
            <person name="Gargano M."/>
            <person name="Ricciardelli A."/>
            <person name="Parrilli E."/>
            <person name="Buonocore C."/>
            <person name="de Pascale D."/>
            <person name="Giardina P."/>
            <person name="Piscitelli A."/>
        </authorList>
    </citation>
    <scope>BIOTECHNOLOGY</scope>
</reference>
<reference key="12">
    <citation type="journal article" date="2021" name="Sci. Rep.">
        <title>Self-assembling thermostable chimeras as new platform for arsenic biosensing.</title>
        <authorList>
            <person name="Puopolo R."/>
            <person name="Sorrentino I."/>
            <person name="Gallo G."/>
            <person name="Piscitelli A."/>
            <person name="Giardina P."/>
            <person name="Le Goff A."/>
            <person name="Fiorentino G."/>
        </authorList>
    </citation>
    <scope>BIOTECHNOLOGY</scope>
</reference>
<reference key="13">
    <citation type="journal article" date="2023" name="FEMS Microbiol. Lett.">
        <title>Features of disruption mutants of genes encoding for hydrophobin Vmh2 and Vmh3 in mycelial formation and resistance to environmental stress in Pleurotus ostreatus.</title>
        <authorList>
            <person name="Han J."/>
            <person name="Kawauchi M."/>
            <person name="Schiphof K."/>
            <person name="Terauchi Y."/>
            <person name="Yoshimi A."/>
            <person name="Tanaka C."/>
            <person name="Nakazawa T."/>
            <person name="Honda Y."/>
        </authorList>
    </citation>
    <scope>FUNCTION</scope>
    <scope>DISRUPTION PHENOTYPE</scope>
</reference>
<reference key="14">
    <citation type="journal article" date="2023" name="Int. J. Mol. Sci.">
        <title>Evidence of Small Fungal Cysteine-Rich Proteins Acting as Biosurfactants and Self-Assembling into Large Fibers.</title>
        <authorList>
            <person name="Pitocchi R."/>
            <person name="Stanzione I."/>
            <person name="Illiano A."/>
            <person name="Amoresano A."/>
            <person name="Tarallo O."/>
            <person name="Cicatiello P."/>
            <person name="Piscitelli A."/>
            <person name="Giardina P."/>
        </authorList>
    </citation>
    <scope>SUBUNIT</scope>
    <scope>BIOTECHNOLOGY</scope>
</reference>
<dbReference type="EMBL" id="KL198014">
    <property type="protein sequence ID" value="KDQ22759.1"/>
    <property type="molecule type" value="Genomic_DNA"/>
</dbReference>
<dbReference type="STRING" id="1137138.A0A067N4H9"/>
<dbReference type="VEuPathDB" id="FungiDB:PLEOSDRAFT_1091049"/>
<dbReference type="HOGENOM" id="CLU_105134_2_0_1"/>
<dbReference type="InParanoid" id="A0A067N4H9"/>
<dbReference type="OrthoDB" id="138913at5338"/>
<dbReference type="Proteomes" id="UP000027073">
    <property type="component" value="Unassembled WGS sequence"/>
</dbReference>
<dbReference type="GO" id="GO:0005576">
    <property type="term" value="C:extracellular region"/>
    <property type="evidence" value="ECO:0007669"/>
    <property type="project" value="UniProtKB-KW"/>
</dbReference>
<dbReference type="GO" id="GO:0009277">
    <property type="term" value="C:fungal-type cell wall"/>
    <property type="evidence" value="ECO:0007669"/>
    <property type="project" value="InterPro"/>
</dbReference>
<dbReference type="GO" id="GO:0005199">
    <property type="term" value="F:structural constituent of cell wall"/>
    <property type="evidence" value="ECO:0007669"/>
    <property type="project" value="InterPro"/>
</dbReference>
<dbReference type="CDD" id="cd23507">
    <property type="entry name" value="hydrophobin_I"/>
    <property type="match status" value="1"/>
</dbReference>
<dbReference type="InterPro" id="IPR001338">
    <property type="entry name" value="Hydrophobin"/>
</dbReference>
<dbReference type="Pfam" id="PF01185">
    <property type="entry name" value="Hydrophobin"/>
    <property type="match status" value="1"/>
</dbReference>
<dbReference type="SMART" id="SM00075">
    <property type="entry name" value="HYDRO"/>
    <property type="match status" value="1"/>
</dbReference>
<sequence length="111" mass="11219">MFSRVMFCTFLILPLLAAATAIPRTDTPSCSTGSLQCCSSVQKASDPLVGIIVALLGIVLGPLDLNVGLTCSPITVIGVGGTSCTQQTVCCTGNNFDGLIVAGCSPINIGL</sequence>
<feature type="signal peptide" evidence="2">
    <location>
        <begin position="1"/>
        <end position="21"/>
    </location>
</feature>
<feature type="chain" id="PRO_5013985533" description="Class I hydrophobin 2" evidence="2">
    <location>
        <begin position="22"/>
        <end position="111"/>
    </location>
</feature>
<feature type="disulfide bond" evidence="1">
    <location>
        <begin position="30"/>
        <end position="90"/>
    </location>
</feature>
<feature type="disulfide bond" evidence="1">
    <location>
        <begin position="37"/>
        <end position="84"/>
    </location>
</feature>
<feature type="disulfide bond" evidence="1">
    <location>
        <begin position="38"/>
        <end position="71"/>
    </location>
</feature>
<feature type="disulfide bond" evidence="1">
    <location>
        <begin position="91"/>
        <end position="104"/>
    </location>
</feature>
<evidence type="ECO:0000250" key="1">
    <source>
        <dbReference type="UniProtKB" id="Q04571"/>
    </source>
</evidence>
<evidence type="ECO:0000255" key="2"/>
<evidence type="ECO:0000269" key="3">
    <source>
    </source>
</evidence>
<evidence type="ECO:0000269" key="4">
    <source>
    </source>
</evidence>
<evidence type="ECO:0000269" key="5">
    <source>
    </source>
</evidence>
<evidence type="ECO:0000269" key="6">
    <source>
    </source>
</evidence>
<evidence type="ECO:0000269" key="7">
    <source>
    </source>
</evidence>
<evidence type="ECO:0000269" key="8">
    <source>
    </source>
</evidence>
<evidence type="ECO:0000269" key="9">
    <source>
    </source>
</evidence>
<evidence type="ECO:0000269" key="10">
    <source>
    </source>
</evidence>
<evidence type="ECO:0000269" key="11">
    <source>
    </source>
</evidence>
<evidence type="ECO:0000269" key="12">
    <source>
    </source>
</evidence>
<evidence type="ECO:0000269" key="13">
    <source>
    </source>
</evidence>
<evidence type="ECO:0000269" key="14">
    <source>
    </source>
</evidence>
<evidence type="ECO:0000269" key="15">
    <source>
    </source>
</evidence>
<evidence type="ECO:0000303" key="16">
    <source>
    </source>
</evidence>
<evidence type="ECO:0000305" key="17"/>
<name>VMH2_PLEO1</name>
<gene>
    <name evidence="16" type="primary">vmh2</name>
    <name type="ORF">PLEOSDRAFT_1091049</name>
</gene>
<comment type="function">
    <text evidence="4 14 17">Aerial growth, conidiation, and dispersal of filamentous fungi in the environment rely upon a capability of their secreting small amphipathic proteins called hydrophobins (HPBs) with low sequence identity. Class I can self-assemble into an outermost layer of rodlet bundles on aerial cell surfaces, conferring cellular hydrophobicity that supports fungal growth, development and dispersal; whereas Class II form highly ordered films at water-air interfaces through intermolecular interactions but contribute nothing to the rodlet structure (Probable). Vmh2 is a class I hydrophobin involved in biofilm formation and is essential for the maintenance of the surface hydrophobicity of the mycelium (PubMed:20100692, PubMed:37081785). Seems not to be involved in hyphal resistance against environmental stress (PubMed:37081785).</text>
</comment>
<comment type="subunit">
    <text evidence="4 5 6 7 9 11 15">Self-assembles to form functional amyloid fibrils called rodlets. Self-assembly into fibrillar rodlets occurs spontaneously at hydrophobic:hydrophilic interfaces and the rodlets further associate laterally to form amphipathic monolayers (PubMed:20100692, PubMed:22181848, PubMed:26828412, PubMed:28686037, PubMed:37762146). Behavior depends on environmental conditions: (1) when the pH increases or in the presence of Ca(2+) ions, an assembled state, beta-sheet rich, is formed; (2) when the solvent polarity increases, the vhm2 shows an increased tendency to reach hydrophobic/hydrophilic interfaces, with no detectable conformational change; and (3) at high temperature, a reversible conformational change and reversible aggregation occur (PubMed:22292968, PubMed:26828412). The physical and chemical properties, both in solution and as a biofilm, are affected by polysaccharides that act as hydrophilic stabilizer (PubMed:20100692, PubMed:22572031).</text>
</comment>
<comment type="subcellular location">
    <subcellularLocation>
        <location evidence="3">Secreted</location>
    </subcellularLocation>
    <subcellularLocation>
        <location evidence="3">Secreted</location>
        <location evidence="3">Cell wall</location>
    </subcellularLocation>
</comment>
<comment type="developmental stage">
    <text evidence="3">Expressed only at the vegetative stage.</text>
</comment>
<comment type="induction">
    <text evidence="3">Expression is not affected by carbon source limitation.</text>
</comment>
<comment type="disruption phenotype">
    <text evidence="14">Alters the cell surface structure and mycelial hydrophobicity (PubMed:37081785). Does not affect aerial mycelia formation on a liquid medium, nor the stress response to H(2)O(2) or SDS (PubMed:37081785).</text>
</comment>
<comment type="biotechnology">
    <text evidence="8 10 11 12 13 15">Acts as a good biosurfactant, stabilizing emulsions in several conditions (concentration, pH, and salinity) and decreasing surface tension to a comparable value to that of some synthetic surfactants (PubMed:37762146). Hybrid protein-metal nanoparticles can be synthesized via a simple one step method using vmh2 and gold. Vmh2 strongly binds to Au core whereas surfactants act as outer shells. Even if engaged within the hybrid complex, vmh2 can interact with a model protein, BSA, more than a standard organic-metal nanoparticles can do. Moreover, interaction of nanoparticles with immunoglobulins was salso demonstrated. These results open a route to simple, effective, and also green chemistry synthesis of a new class of hybrid multipurpose nanoparticles which will be tailored for different biomedical application, such as sensing, drugs targeting and delivering (PubMed:26402419). The vmh2 layer also shows anti-biofilm activity with respect to Staphylococcus epidermidis, a significant nosocomial pathogen that forms a biofilm on indwelling medical devices. This activity is also interesting in view of the possible industrial applicative uses of hydrophobins in medical fields (PubMed:28686037, PubMed:32768482). Hydrophobins such as vmh2 also represent an invaluable tool for the development of self-immobilizing enzymes useful for high throughput analyzes (PubMed:27427236, PubMed:33542380). Vmh2 can be used to create a GST-based biosensor to quantify toxic compounds, such as the pesticides molinate and captan, in aqueous environmental samples (PubMed:27427236).</text>
</comment>
<comment type="similarity">
    <text evidence="17">Belongs to the fungal hydrophobin family.</text>
</comment>
<proteinExistence type="evidence at protein level"/>
<organism>
    <name type="scientific">Pleurotus ostreatus (strain PC15)</name>
    <name type="common">Oyster mushroom</name>
    <dbReference type="NCBI Taxonomy" id="1137138"/>
    <lineage>
        <taxon>Eukaryota</taxon>
        <taxon>Fungi</taxon>
        <taxon>Dikarya</taxon>
        <taxon>Basidiomycota</taxon>
        <taxon>Agaricomycotina</taxon>
        <taxon>Agaricomycetes</taxon>
        <taxon>Agaricomycetidae</taxon>
        <taxon>Agaricales</taxon>
        <taxon>Pleurotineae</taxon>
        <taxon>Pleurotaceae</taxon>
        <taxon>Pleurotus</taxon>
    </lineage>
</organism>
<protein>
    <recommendedName>
        <fullName evidence="16">Class I hydrophobin 2</fullName>
    </recommendedName>
</protein>